<comment type="function">
    <text evidence="1">Binds directly to 16S ribosomal RNA.</text>
</comment>
<comment type="similarity">
    <text evidence="1">Belongs to the bacterial ribosomal protein bS20 family.</text>
</comment>
<gene>
    <name evidence="1" type="primary">rpsT</name>
    <name type="ordered locus">BR2185</name>
    <name type="ordered locus">BS1330_I2179</name>
</gene>
<keyword id="KW-0687">Ribonucleoprotein</keyword>
<keyword id="KW-0689">Ribosomal protein</keyword>
<keyword id="KW-0694">RNA-binding</keyword>
<keyword id="KW-0699">rRNA-binding</keyword>
<proteinExistence type="inferred from homology"/>
<reference key="1">
    <citation type="journal article" date="2002" name="Proc. Natl. Acad. Sci. U.S.A.">
        <title>The Brucella suis genome reveals fundamental similarities between animal and plant pathogens and symbionts.</title>
        <authorList>
            <person name="Paulsen I.T."/>
            <person name="Seshadri R."/>
            <person name="Nelson K.E."/>
            <person name="Eisen J.A."/>
            <person name="Heidelberg J.F."/>
            <person name="Read T.D."/>
            <person name="Dodson R.J."/>
            <person name="Umayam L.A."/>
            <person name="Brinkac L.M."/>
            <person name="Beanan M.J."/>
            <person name="Daugherty S.C."/>
            <person name="DeBoy R.T."/>
            <person name="Durkin A.S."/>
            <person name="Kolonay J.F."/>
            <person name="Madupu R."/>
            <person name="Nelson W.C."/>
            <person name="Ayodeji B."/>
            <person name="Kraul M."/>
            <person name="Shetty J."/>
            <person name="Malek J.A."/>
            <person name="Van Aken S.E."/>
            <person name="Riedmuller S."/>
            <person name="Tettelin H."/>
            <person name="Gill S.R."/>
            <person name="White O."/>
            <person name="Salzberg S.L."/>
            <person name="Hoover D.L."/>
            <person name="Lindler L.E."/>
            <person name="Halling S.M."/>
            <person name="Boyle S.M."/>
            <person name="Fraser C.M."/>
        </authorList>
    </citation>
    <scope>NUCLEOTIDE SEQUENCE [LARGE SCALE GENOMIC DNA]</scope>
    <source>
        <strain>1330</strain>
    </source>
</reference>
<reference key="2">
    <citation type="journal article" date="2011" name="J. Bacteriol.">
        <title>Revised genome sequence of Brucella suis 1330.</title>
        <authorList>
            <person name="Tae H."/>
            <person name="Shallom S."/>
            <person name="Settlage R."/>
            <person name="Preston D."/>
            <person name="Adams L.G."/>
            <person name="Garner H.R."/>
        </authorList>
    </citation>
    <scope>NUCLEOTIDE SEQUENCE [LARGE SCALE GENOMIC DNA]</scope>
    <source>
        <strain>1330</strain>
    </source>
</reference>
<dbReference type="EMBL" id="AE014291">
    <property type="protein sequence ID" value="AAN31074.1"/>
    <property type="molecule type" value="Genomic_DNA"/>
</dbReference>
<dbReference type="EMBL" id="CP002997">
    <property type="protein sequence ID" value="AEM19492.1"/>
    <property type="molecule type" value="Genomic_DNA"/>
</dbReference>
<dbReference type="RefSeq" id="WP_002965247.1">
    <property type="nucleotide sequence ID" value="NZ_KN046804.1"/>
</dbReference>
<dbReference type="SMR" id="P66502"/>
<dbReference type="GeneID" id="97534562"/>
<dbReference type="KEGG" id="bms:BR2185"/>
<dbReference type="KEGG" id="bsi:BS1330_I2179"/>
<dbReference type="PATRIC" id="fig|204722.21.peg.623"/>
<dbReference type="HOGENOM" id="CLU_160655_3_0_5"/>
<dbReference type="Proteomes" id="UP000007104">
    <property type="component" value="Chromosome I"/>
</dbReference>
<dbReference type="GO" id="GO:0015935">
    <property type="term" value="C:small ribosomal subunit"/>
    <property type="evidence" value="ECO:0007669"/>
    <property type="project" value="TreeGrafter"/>
</dbReference>
<dbReference type="GO" id="GO:0070181">
    <property type="term" value="F:small ribosomal subunit rRNA binding"/>
    <property type="evidence" value="ECO:0007669"/>
    <property type="project" value="TreeGrafter"/>
</dbReference>
<dbReference type="GO" id="GO:0003735">
    <property type="term" value="F:structural constituent of ribosome"/>
    <property type="evidence" value="ECO:0007669"/>
    <property type="project" value="InterPro"/>
</dbReference>
<dbReference type="GO" id="GO:0006412">
    <property type="term" value="P:translation"/>
    <property type="evidence" value="ECO:0007669"/>
    <property type="project" value="UniProtKB-UniRule"/>
</dbReference>
<dbReference type="FunFam" id="1.20.58.110:FF:000001">
    <property type="entry name" value="30S ribosomal protein S20"/>
    <property type="match status" value="1"/>
</dbReference>
<dbReference type="Gene3D" id="1.20.58.110">
    <property type="entry name" value="Ribosomal protein S20"/>
    <property type="match status" value="1"/>
</dbReference>
<dbReference type="HAMAP" id="MF_00500">
    <property type="entry name" value="Ribosomal_bS20"/>
    <property type="match status" value="1"/>
</dbReference>
<dbReference type="InterPro" id="IPR002583">
    <property type="entry name" value="Ribosomal_bS20"/>
</dbReference>
<dbReference type="InterPro" id="IPR036510">
    <property type="entry name" value="Ribosomal_bS20_sf"/>
</dbReference>
<dbReference type="NCBIfam" id="TIGR00029">
    <property type="entry name" value="S20"/>
    <property type="match status" value="1"/>
</dbReference>
<dbReference type="PANTHER" id="PTHR33398">
    <property type="entry name" value="30S RIBOSOMAL PROTEIN S20"/>
    <property type="match status" value="1"/>
</dbReference>
<dbReference type="PANTHER" id="PTHR33398:SF1">
    <property type="entry name" value="SMALL RIBOSOMAL SUBUNIT PROTEIN BS20C"/>
    <property type="match status" value="1"/>
</dbReference>
<dbReference type="Pfam" id="PF01649">
    <property type="entry name" value="Ribosomal_S20p"/>
    <property type="match status" value="1"/>
</dbReference>
<dbReference type="SUPFAM" id="SSF46992">
    <property type="entry name" value="Ribosomal protein S20"/>
    <property type="match status" value="1"/>
</dbReference>
<feature type="chain" id="PRO_0000167933" description="Small ribosomal subunit protein bS20">
    <location>
        <begin position="1"/>
        <end position="88"/>
    </location>
</feature>
<organism>
    <name type="scientific">Brucella suis biovar 1 (strain 1330)</name>
    <dbReference type="NCBI Taxonomy" id="204722"/>
    <lineage>
        <taxon>Bacteria</taxon>
        <taxon>Pseudomonadati</taxon>
        <taxon>Pseudomonadota</taxon>
        <taxon>Alphaproteobacteria</taxon>
        <taxon>Hyphomicrobiales</taxon>
        <taxon>Brucellaceae</taxon>
        <taxon>Brucella/Ochrobactrum group</taxon>
        <taxon>Brucella</taxon>
    </lineage>
</organism>
<accession>P66502</accession>
<accession>G0K9L1</accession>
<accession>Q8YED4</accession>
<protein>
    <recommendedName>
        <fullName evidence="1">Small ribosomal subunit protein bS20</fullName>
    </recommendedName>
    <alternativeName>
        <fullName evidence="2">30S ribosomal protein S20</fullName>
    </alternativeName>
</protein>
<sequence>MANTPSAKKAVRKIAARTEINKSRRSRVRTFVRKLEDALLSGDKQAAEVAFKAVEPELMRAASKGVVHKNTAARKVSRLAKRVKALNA</sequence>
<name>RS20_BRUSU</name>
<evidence type="ECO:0000255" key="1">
    <source>
        <dbReference type="HAMAP-Rule" id="MF_00500"/>
    </source>
</evidence>
<evidence type="ECO:0000305" key="2"/>